<evidence type="ECO:0000250" key="1">
    <source>
        <dbReference type="UniProtKB" id="Q96DE5"/>
    </source>
</evidence>
<evidence type="ECO:0000256" key="2">
    <source>
        <dbReference type="SAM" id="MobiDB-lite"/>
    </source>
</evidence>
<evidence type="ECO:0000305" key="3"/>
<name>APC16_XENLA</name>
<sequence length="112" mass="11777">MAASSSSSSAGGVSGSSVTGSGLSVSDLAPPRKALFTCPKAAGEMLEDGSERFLCESVFSYQVASTLKQVKHDQQVSRMEKLAGLVEELEADEWRYTPIEQLLGFTPSSGGK</sequence>
<protein>
    <recommendedName>
        <fullName>Anaphase-promoting complex subunit 16</fullName>
        <shortName>APC16</shortName>
    </recommendedName>
    <alternativeName>
        <fullName>Cyclosome subunit 16</fullName>
    </alternativeName>
</protein>
<proteinExistence type="inferred from homology"/>
<reference key="1">
    <citation type="submission" date="2004-06" db="EMBL/GenBank/DDBJ databases">
        <authorList>
            <consortium name="NIH - Xenopus Gene Collection (XGC) project"/>
        </authorList>
    </citation>
    <scope>NUCLEOTIDE SEQUENCE [LARGE SCALE MRNA]</scope>
    <source>
        <tissue>Ovary</tissue>
    </source>
</reference>
<accession>Q6GQ63</accession>
<dbReference type="EMBL" id="BC072885">
    <property type="protein sequence ID" value="AAH72885.1"/>
    <property type="molecule type" value="mRNA"/>
</dbReference>
<dbReference type="RefSeq" id="NP_001085523.1">
    <property type="nucleotide sequence ID" value="NM_001092054.1"/>
</dbReference>
<dbReference type="SMR" id="Q6GQ63"/>
<dbReference type="DNASU" id="443949"/>
<dbReference type="GeneID" id="443949"/>
<dbReference type="KEGG" id="xla:443949"/>
<dbReference type="AGR" id="Xenbase:XB-GENE-953460"/>
<dbReference type="CTD" id="443949"/>
<dbReference type="Xenbase" id="XB-GENE-953460">
    <property type="gene designation" value="anapc16.L"/>
</dbReference>
<dbReference type="OrthoDB" id="6374621at2759"/>
<dbReference type="UniPathway" id="UPA00143"/>
<dbReference type="Proteomes" id="UP000186698">
    <property type="component" value="Chromosome 7L"/>
</dbReference>
<dbReference type="Bgee" id="443949">
    <property type="expression patterns" value="Expressed in muscle tissue and 19 other cell types or tissues"/>
</dbReference>
<dbReference type="GO" id="GO:0005680">
    <property type="term" value="C:anaphase-promoting complex"/>
    <property type="evidence" value="ECO:0000250"/>
    <property type="project" value="UniProtKB"/>
</dbReference>
<dbReference type="GO" id="GO:0005829">
    <property type="term" value="C:cytosol"/>
    <property type="evidence" value="ECO:0000318"/>
    <property type="project" value="GO_Central"/>
</dbReference>
<dbReference type="GO" id="GO:0000776">
    <property type="term" value="C:kinetochore"/>
    <property type="evidence" value="ECO:0000250"/>
    <property type="project" value="UniProtKB"/>
</dbReference>
<dbReference type="GO" id="GO:0031145">
    <property type="term" value="P:anaphase-promoting complex-dependent catabolic process"/>
    <property type="evidence" value="ECO:0000250"/>
    <property type="project" value="UniProtKB"/>
</dbReference>
<dbReference type="GO" id="GO:0051301">
    <property type="term" value="P:cell division"/>
    <property type="evidence" value="ECO:0007669"/>
    <property type="project" value="UniProtKB-KW"/>
</dbReference>
<dbReference type="GO" id="GO:0141198">
    <property type="term" value="P:protein branched polyubiquitination"/>
    <property type="evidence" value="ECO:0000250"/>
    <property type="project" value="UniProtKB"/>
</dbReference>
<dbReference type="GO" id="GO:0070979">
    <property type="term" value="P:protein K11-linked ubiquitination"/>
    <property type="evidence" value="ECO:0000250"/>
    <property type="project" value="UniProtKB"/>
</dbReference>
<dbReference type="GO" id="GO:0070936">
    <property type="term" value="P:protein K48-linked ubiquitination"/>
    <property type="evidence" value="ECO:0000250"/>
    <property type="project" value="UniProtKB"/>
</dbReference>
<dbReference type="GO" id="GO:0016567">
    <property type="term" value="P:protein ubiquitination"/>
    <property type="evidence" value="ECO:0000250"/>
    <property type="project" value="UniProtKB"/>
</dbReference>
<dbReference type="InterPro" id="IPR029641">
    <property type="entry name" value="APC16"/>
</dbReference>
<dbReference type="PANTHER" id="PTHR31564">
    <property type="entry name" value="ANAPHASE-PROMOTING COMPLEX SUBUNIT 16"/>
    <property type="match status" value="1"/>
</dbReference>
<dbReference type="PANTHER" id="PTHR31564:SF0">
    <property type="entry name" value="ANAPHASE-PROMOTING COMPLEX SUBUNIT 16"/>
    <property type="match status" value="1"/>
</dbReference>
<dbReference type="Pfam" id="PF17256">
    <property type="entry name" value="ANAPC16"/>
    <property type="match status" value="1"/>
</dbReference>
<organism>
    <name type="scientific">Xenopus laevis</name>
    <name type="common">African clawed frog</name>
    <dbReference type="NCBI Taxonomy" id="8355"/>
    <lineage>
        <taxon>Eukaryota</taxon>
        <taxon>Metazoa</taxon>
        <taxon>Chordata</taxon>
        <taxon>Craniata</taxon>
        <taxon>Vertebrata</taxon>
        <taxon>Euteleostomi</taxon>
        <taxon>Amphibia</taxon>
        <taxon>Batrachia</taxon>
        <taxon>Anura</taxon>
        <taxon>Pipoidea</taxon>
        <taxon>Pipidae</taxon>
        <taxon>Xenopodinae</taxon>
        <taxon>Xenopus</taxon>
        <taxon>Xenopus</taxon>
    </lineage>
</organism>
<comment type="function">
    <text evidence="1">Component of the anaphase promoting complex/cyclosome (APC/C), a cell cycle-regulated E3 ubiquitin ligase that controls progression through mitosis and the G1 phase of the cell cycle. The APC/C complex acts by mediating ubiquitination and subsequent degradation of target proteins: it mainly mediates the formation of 'Lys-11'-linked polyubiquitin chains and, to a lower extent, the formation of 'Lys-48'- and 'Lys-63'-linked polyubiquitin chains. The APC/C complex catalyzes assembly of branched 'Lys-11'-/'Lys-48'-linked branched ubiquitin chains on target proteins.</text>
</comment>
<comment type="pathway">
    <text evidence="1">Protein modification; protein ubiquitination.</text>
</comment>
<comment type="subunit">
    <text evidence="1">The APC/C is composed of at least 12 subunits. ANAPC16 associates with the rest of the complex independently of ANAPC2 and ANAPC11 (By similarity).</text>
</comment>
<comment type="subcellular location">
    <subcellularLocation>
        <location evidence="1">Cytoplasm</location>
    </subcellularLocation>
    <subcellularLocation>
        <location evidence="1">Nucleus</location>
    </subcellularLocation>
    <subcellularLocation>
        <location evidence="1">Chromosome</location>
        <location evidence="1">Centromere</location>
        <location evidence="1">Kinetochore</location>
    </subcellularLocation>
</comment>
<comment type="similarity">
    <text evidence="3">Belongs to the APC16 family.</text>
</comment>
<gene>
    <name type="primary">anapc16</name>
</gene>
<feature type="chain" id="PRO_0000294085" description="Anaphase-promoting complex subunit 16">
    <location>
        <begin position="1"/>
        <end position="112"/>
    </location>
</feature>
<feature type="region of interest" description="Disordered" evidence="2">
    <location>
        <begin position="1"/>
        <end position="29"/>
    </location>
</feature>
<feature type="compositionally biased region" description="Low complexity" evidence="2">
    <location>
        <begin position="1"/>
        <end position="26"/>
    </location>
</feature>
<keyword id="KW-0131">Cell cycle</keyword>
<keyword id="KW-0132">Cell division</keyword>
<keyword id="KW-0137">Centromere</keyword>
<keyword id="KW-0158">Chromosome</keyword>
<keyword id="KW-0963">Cytoplasm</keyword>
<keyword id="KW-0995">Kinetochore</keyword>
<keyword id="KW-0498">Mitosis</keyword>
<keyword id="KW-0539">Nucleus</keyword>
<keyword id="KW-1185">Reference proteome</keyword>
<keyword id="KW-0833">Ubl conjugation pathway</keyword>